<keyword id="KW-0687">Ribonucleoprotein</keyword>
<keyword id="KW-0689">Ribosomal protein</keyword>
<keyword id="KW-0694">RNA-binding</keyword>
<keyword id="KW-0699">rRNA-binding</keyword>
<sequence length="172" mass="17985">MERAEKREFVTELNEVFKASGSVVVAHYAGATVAQMNDFRSKMRAAGGTVKVAKNRLAKIALQGTDAEGISNLFTGQTLIAYSTDPITAPKVVVDFAKGNDKIVVLGGAMGTTTLNADGVKSLATLPSLDELRAKLLGMIQTPATRIAGVVAAPASQLARVFSAYAKKDEAA</sequence>
<accession>B9JDR9</accession>
<comment type="function">
    <text evidence="1">Forms part of the ribosomal stalk, playing a central role in the interaction of the ribosome with GTP-bound translation factors.</text>
</comment>
<comment type="subunit">
    <text evidence="1">Part of the ribosomal stalk of the 50S ribosomal subunit. The N-terminus interacts with L11 and the large rRNA to form the base of the stalk. The C-terminus forms an elongated spine to which L12 dimers bind in a sequential fashion forming a multimeric L10(L12)X complex.</text>
</comment>
<comment type="similarity">
    <text evidence="1">Belongs to the universal ribosomal protein uL10 family.</text>
</comment>
<reference key="1">
    <citation type="journal article" date="2009" name="J. Bacteriol.">
        <title>Genome sequences of three Agrobacterium biovars help elucidate the evolution of multichromosome genomes in bacteria.</title>
        <authorList>
            <person name="Slater S.C."/>
            <person name="Goldman B.S."/>
            <person name="Goodner B."/>
            <person name="Setubal J.C."/>
            <person name="Farrand S.K."/>
            <person name="Nester E.W."/>
            <person name="Burr T.J."/>
            <person name="Banta L."/>
            <person name="Dickerman A.W."/>
            <person name="Paulsen I."/>
            <person name="Otten L."/>
            <person name="Suen G."/>
            <person name="Welch R."/>
            <person name="Almeida N.F."/>
            <person name="Arnold F."/>
            <person name="Burton O.T."/>
            <person name="Du Z."/>
            <person name="Ewing A."/>
            <person name="Godsy E."/>
            <person name="Heisel S."/>
            <person name="Houmiel K.L."/>
            <person name="Jhaveri J."/>
            <person name="Lu J."/>
            <person name="Miller N.M."/>
            <person name="Norton S."/>
            <person name="Chen Q."/>
            <person name="Phoolcharoen W."/>
            <person name="Ohlin V."/>
            <person name="Ondrusek D."/>
            <person name="Pride N."/>
            <person name="Stricklin S.L."/>
            <person name="Sun J."/>
            <person name="Wheeler C."/>
            <person name="Wilson L."/>
            <person name="Zhu H."/>
            <person name="Wood D.W."/>
        </authorList>
    </citation>
    <scope>NUCLEOTIDE SEQUENCE [LARGE SCALE GENOMIC DNA]</scope>
    <source>
        <strain>K84 / ATCC BAA-868</strain>
    </source>
</reference>
<protein>
    <recommendedName>
        <fullName evidence="1">Large ribosomal subunit protein uL10</fullName>
    </recommendedName>
    <alternativeName>
        <fullName evidence="2">50S ribosomal protein L10</fullName>
    </alternativeName>
</protein>
<feature type="chain" id="PRO_1000195520" description="Large ribosomal subunit protein uL10">
    <location>
        <begin position="1"/>
        <end position="172"/>
    </location>
</feature>
<organism>
    <name type="scientific">Rhizobium rhizogenes (strain K84 / ATCC BAA-868)</name>
    <name type="common">Agrobacterium radiobacter</name>
    <dbReference type="NCBI Taxonomy" id="311403"/>
    <lineage>
        <taxon>Bacteria</taxon>
        <taxon>Pseudomonadati</taxon>
        <taxon>Pseudomonadota</taxon>
        <taxon>Alphaproteobacteria</taxon>
        <taxon>Hyphomicrobiales</taxon>
        <taxon>Rhizobiaceae</taxon>
        <taxon>Rhizobium/Agrobacterium group</taxon>
        <taxon>Rhizobium</taxon>
    </lineage>
</organism>
<name>RL10_RHIR8</name>
<dbReference type="EMBL" id="CP000628">
    <property type="protein sequence ID" value="ACM26270.1"/>
    <property type="molecule type" value="Genomic_DNA"/>
</dbReference>
<dbReference type="RefSeq" id="WP_007702188.1">
    <property type="nucleotide sequence ID" value="NC_011985.1"/>
</dbReference>
<dbReference type="SMR" id="B9JDR9"/>
<dbReference type="STRING" id="311403.Arad_1959"/>
<dbReference type="GeneID" id="86848157"/>
<dbReference type="KEGG" id="ara:Arad_1959"/>
<dbReference type="eggNOG" id="COG0244">
    <property type="taxonomic scope" value="Bacteria"/>
</dbReference>
<dbReference type="HOGENOM" id="CLU_092227_0_0_5"/>
<dbReference type="Proteomes" id="UP000001600">
    <property type="component" value="Chromosome 1"/>
</dbReference>
<dbReference type="GO" id="GO:1990904">
    <property type="term" value="C:ribonucleoprotein complex"/>
    <property type="evidence" value="ECO:0007669"/>
    <property type="project" value="UniProtKB-KW"/>
</dbReference>
<dbReference type="GO" id="GO:0005840">
    <property type="term" value="C:ribosome"/>
    <property type="evidence" value="ECO:0007669"/>
    <property type="project" value="UniProtKB-KW"/>
</dbReference>
<dbReference type="GO" id="GO:0070180">
    <property type="term" value="F:large ribosomal subunit rRNA binding"/>
    <property type="evidence" value="ECO:0007669"/>
    <property type="project" value="UniProtKB-UniRule"/>
</dbReference>
<dbReference type="GO" id="GO:0006412">
    <property type="term" value="P:translation"/>
    <property type="evidence" value="ECO:0007669"/>
    <property type="project" value="UniProtKB-UniRule"/>
</dbReference>
<dbReference type="CDD" id="cd05797">
    <property type="entry name" value="Ribosomal_L10"/>
    <property type="match status" value="1"/>
</dbReference>
<dbReference type="Gene3D" id="3.30.70.1730">
    <property type="match status" value="1"/>
</dbReference>
<dbReference type="Gene3D" id="6.10.250.290">
    <property type="match status" value="1"/>
</dbReference>
<dbReference type="HAMAP" id="MF_00362">
    <property type="entry name" value="Ribosomal_uL10"/>
    <property type="match status" value="1"/>
</dbReference>
<dbReference type="InterPro" id="IPR001790">
    <property type="entry name" value="Ribosomal_uL10"/>
</dbReference>
<dbReference type="InterPro" id="IPR043141">
    <property type="entry name" value="Ribosomal_uL10-like_sf"/>
</dbReference>
<dbReference type="InterPro" id="IPR022973">
    <property type="entry name" value="Ribosomal_uL10_bac"/>
</dbReference>
<dbReference type="InterPro" id="IPR047865">
    <property type="entry name" value="Ribosomal_uL10_bac_type"/>
</dbReference>
<dbReference type="NCBIfam" id="NF000955">
    <property type="entry name" value="PRK00099.1-1"/>
    <property type="match status" value="1"/>
</dbReference>
<dbReference type="PANTHER" id="PTHR11560">
    <property type="entry name" value="39S RIBOSOMAL PROTEIN L10, MITOCHONDRIAL"/>
    <property type="match status" value="1"/>
</dbReference>
<dbReference type="Pfam" id="PF00466">
    <property type="entry name" value="Ribosomal_L10"/>
    <property type="match status" value="1"/>
</dbReference>
<dbReference type="SUPFAM" id="SSF160369">
    <property type="entry name" value="Ribosomal protein L10-like"/>
    <property type="match status" value="1"/>
</dbReference>
<proteinExistence type="inferred from homology"/>
<evidence type="ECO:0000255" key="1">
    <source>
        <dbReference type="HAMAP-Rule" id="MF_00362"/>
    </source>
</evidence>
<evidence type="ECO:0000305" key="2"/>
<gene>
    <name evidence="1" type="primary">rplJ</name>
    <name type="ordered locus">Arad_1959</name>
</gene>